<gene>
    <name evidence="1" type="primary">sat</name>
    <name type="ordered locus">BT9727_1304</name>
</gene>
<reference key="1">
    <citation type="journal article" date="2006" name="J. Bacteriol.">
        <title>Pathogenomic sequence analysis of Bacillus cereus and Bacillus thuringiensis isolates closely related to Bacillus anthracis.</title>
        <authorList>
            <person name="Han C.S."/>
            <person name="Xie G."/>
            <person name="Challacombe J.F."/>
            <person name="Altherr M.R."/>
            <person name="Bhotika S.S."/>
            <person name="Bruce D."/>
            <person name="Campbell C.S."/>
            <person name="Campbell M.L."/>
            <person name="Chen J."/>
            <person name="Chertkov O."/>
            <person name="Cleland C."/>
            <person name="Dimitrijevic M."/>
            <person name="Doggett N.A."/>
            <person name="Fawcett J.J."/>
            <person name="Glavina T."/>
            <person name="Goodwin L.A."/>
            <person name="Hill K.K."/>
            <person name="Hitchcock P."/>
            <person name="Jackson P.J."/>
            <person name="Keim P."/>
            <person name="Kewalramani A.R."/>
            <person name="Longmire J."/>
            <person name="Lucas S."/>
            <person name="Malfatti S."/>
            <person name="McMurry K."/>
            <person name="Meincke L.J."/>
            <person name="Misra M."/>
            <person name="Moseman B.L."/>
            <person name="Mundt M."/>
            <person name="Munk A.C."/>
            <person name="Okinaka R.T."/>
            <person name="Parson-Quintana B."/>
            <person name="Reilly L.P."/>
            <person name="Richardson P."/>
            <person name="Robinson D.L."/>
            <person name="Rubin E."/>
            <person name="Saunders E."/>
            <person name="Tapia R."/>
            <person name="Tesmer J.G."/>
            <person name="Thayer N."/>
            <person name="Thompson L.S."/>
            <person name="Tice H."/>
            <person name="Ticknor L.O."/>
            <person name="Wills P.L."/>
            <person name="Brettin T.S."/>
            <person name="Gilna P."/>
        </authorList>
    </citation>
    <scope>NUCLEOTIDE SEQUENCE [LARGE SCALE GENOMIC DNA]</scope>
    <source>
        <strain>97-27</strain>
    </source>
</reference>
<name>SAT_BACHK</name>
<proteinExistence type="inferred from homology"/>
<keyword id="KW-0067">ATP-binding</keyword>
<keyword id="KW-0547">Nucleotide-binding</keyword>
<keyword id="KW-0548">Nucleotidyltransferase</keyword>
<keyword id="KW-0808">Transferase</keyword>
<accession>Q6HLD3</accession>
<protein>
    <recommendedName>
        <fullName evidence="1">Sulfate adenylyltransferase</fullName>
        <ecNumber evidence="1">2.7.7.4</ecNumber>
    </recommendedName>
    <alternativeName>
        <fullName evidence="1">ATP-sulfurylase</fullName>
    </alternativeName>
    <alternativeName>
        <fullName evidence="1">Sulfate adenylate transferase</fullName>
        <shortName evidence="1">SAT</shortName>
    </alternativeName>
</protein>
<evidence type="ECO:0000255" key="1">
    <source>
        <dbReference type="HAMAP-Rule" id="MF_00066"/>
    </source>
</evidence>
<sequence length="378" mass="42730">MSTVNELVNRVDETYDVLQIEKEIVLDNIALSDLELLATGGYSPLTGFLRKKDYDSVVETLRLANGSVWSIPITLPVTEEVAETLKVGEEVKLVNGGNVYGVIQIEDIFVPDKEKEALLVYKTTDEAHPGVKKLYERPNVYVGGAIVLTKRFENNPFPSYHLDPIETREEFKKRGWKTVVGFQTRNPVHRAHEYIQKSALEIVDGLFLNPLVGETKSDDIPADVRMESYEVLLQNYYPKDRVFLSVFPAAMRYAGPREAIFHALVRKNFGCTHFIVGRDHAGVGDYYGTYEAQEIFTNFTVEELGITPLFFEHSFYCTKCEAMASTKTCPHGKEDHVILSGTKVRELLRNGEIPPSTFSRKEVVEVLIKGLKKEVVTE</sequence>
<comment type="catalytic activity">
    <reaction evidence="1">
        <text>sulfate + ATP + H(+) = adenosine 5'-phosphosulfate + diphosphate</text>
        <dbReference type="Rhea" id="RHEA:18133"/>
        <dbReference type="ChEBI" id="CHEBI:15378"/>
        <dbReference type="ChEBI" id="CHEBI:16189"/>
        <dbReference type="ChEBI" id="CHEBI:30616"/>
        <dbReference type="ChEBI" id="CHEBI:33019"/>
        <dbReference type="ChEBI" id="CHEBI:58243"/>
        <dbReference type="EC" id="2.7.7.4"/>
    </reaction>
</comment>
<comment type="pathway">
    <text evidence="1">Sulfur metabolism; hydrogen sulfide biosynthesis; sulfite from sulfate: step 1/3.</text>
</comment>
<comment type="similarity">
    <text evidence="1">Belongs to the sulfate adenylyltransferase family.</text>
</comment>
<dbReference type="EC" id="2.7.7.4" evidence="1"/>
<dbReference type="EMBL" id="AE017355">
    <property type="protein sequence ID" value="AAT62348.1"/>
    <property type="molecule type" value="Genomic_DNA"/>
</dbReference>
<dbReference type="RefSeq" id="WP_000108789.1">
    <property type="nucleotide sequence ID" value="NC_005957.1"/>
</dbReference>
<dbReference type="RefSeq" id="YP_035638.1">
    <property type="nucleotide sequence ID" value="NC_005957.1"/>
</dbReference>
<dbReference type="SMR" id="Q6HLD3"/>
<dbReference type="KEGG" id="btk:BT9727_1304"/>
<dbReference type="PATRIC" id="fig|281309.8.peg.1375"/>
<dbReference type="HOGENOM" id="CLU_022950_1_1_9"/>
<dbReference type="UniPathway" id="UPA00140">
    <property type="reaction ID" value="UER00204"/>
</dbReference>
<dbReference type="Proteomes" id="UP000001301">
    <property type="component" value="Chromosome"/>
</dbReference>
<dbReference type="GO" id="GO:0005524">
    <property type="term" value="F:ATP binding"/>
    <property type="evidence" value="ECO:0007669"/>
    <property type="project" value="UniProtKB-KW"/>
</dbReference>
<dbReference type="GO" id="GO:0004781">
    <property type="term" value="F:sulfate adenylyltransferase (ATP) activity"/>
    <property type="evidence" value="ECO:0007669"/>
    <property type="project" value="UniProtKB-UniRule"/>
</dbReference>
<dbReference type="GO" id="GO:0070814">
    <property type="term" value="P:hydrogen sulfide biosynthetic process"/>
    <property type="evidence" value="ECO:0007669"/>
    <property type="project" value="UniProtKB-UniRule"/>
</dbReference>
<dbReference type="GO" id="GO:0000103">
    <property type="term" value="P:sulfate assimilation"/>
    <property type="evidence" value="ECO:0007669"/>
    <property type="project" value="UniProtKB-UniRule"/>
</dbReference>
<dbReference type="CDD" id="cd00517">
    <property type="entry name" value="ATPS"/>
    <property type="match status" value="1"/>
</dbReference>
<dbReference type="Gene3D" id="3.40.50.620">
    <property type="entry name" value="HUPs"/>
    <property type="match status" value="1"/>
</dbReference>
<dbReference type="Gene3D" id="3.10.400.10">
    <property type="entry name" value="Sulfate adenylyltransferase"/>
    <property type="match status" value="1"/>
</dbReference>
<dbReference type="HAMAP" id="MF_00066">
    <property type="entry name" value="Sulf_adenylyltr"/>
    <property type="match status" value="1"/>
</dbReference>
<dbReference type="InterPro" id="IPR025980">
    <property type="entry name" value="ATP-Sase_PUA-like_dom"/>
</dbReference>
<dbReference type="InterPro" id="IPR015947">
    <property type="entry name" value="PUA-like_sf"/>
</dbReference>
<dbReference type="InterPro" id="IPR014729">
    <property type="entry name" value="Rossmann-like_a/b/a_fold"/>
</dbReference>
<dbReference type="InterPro" id="IPR020792">
    <property type="entry name" value="SO4_adenylyltransferase_pro"/>
</dbReference>
<dbReference type="InterPro" id="IPR024951">
    <property type="entry name" value="Sulfurylase_cat_dom"/>
</dbReference>
<dbReference type="InterPro" id="IPR002650">
    <property type="entry name" value="Sulphate_adenylyltransferase"/>
</dbReference>
<dbReference type="NCBIfam" id="NF003166">
    <property type="entry name" value="PRK04149.1"/>
    <property type="match status" value="1"/>
</dbReference>
<dbReference type="NCBIfam" id="TIGR00339">
    <property type="entry name" value="sopT"/>
    <property type="match status" value="1"/>
</dbReference>
<dbReference type="PANTHER" id="PTHR43509">
    <property type="match status" value="1"/>
</dbReference>
<dbReference type="PANTHER" id="PTHR43509:SF1">
    <property type="entry name" value="SULFATE ADENYLYLTRANSFERASE"/>
    <property type="match status" value="1"/>
</dbReference>
<dbReference type="Pfam" id="PF01747">
    <property type="entry name" value="ATP-sulfurylase"/>
    <property type="match status" value="1"/>
</dbReference>
<dbReference type="Pfam" id="PF14306">
    <property type="entry name" value="PUA_2"/>
    <property type="match status" value="1"/>
</dbReference>
<dbReference type="SUPFAM" id="SSF52374">
    <property type="entry name" value="Nucleotidylyl transferase"/>
    <property type="match status" value="1"/>
</dbReference>
<dbReference type="SUPFAM" id="SSF88697">
    <property type="entry name" value="PUA domain-like"/>
    <property type="match status" value="1"/>
</dbReference>
<feature type="chain" id="PRO_0000340616" description="Sulfate adenylyltransferase">
    <location>
        <begin position="1"/>
        <end position="378"/>
    </location>
</feature>
<organism>
    <name type="scientific">Bacillus thuringiensis subsp. konkukian (strain 97-27)</name>
    <dbReference type="NCBI Taxonomy" id="281309"/>
    <lineage>
        <taxon>Bacteria</taxon>
        <taxon>Bacillati</taxon>
        <taxon>Bacillota</taxon>
        <taxon>Bacilli</taxon>
        <taxon>Bacillales</taxon>
        <taxon>Bacillaceae</taxon>
        <taxon>Bacillus</taxon>
        <taxon>Bacillus cereus group</taxon>
    </lineage>
</organism>